<accession>P0C7S7</accession>
<proteinExistence type="evidence at protein level"/>
<sequence length="11" mass="1128">QGRPLGPPIPP</sequence>
<feature type="peptide" id="PRO_0000343191" description="Bradykinin-potentiating peptide TmF">
    <location>
        <begin position="1"/>
        <end position="11"/>
    </location>
</feature>
<feature type="modified residue" description="Pyrrolidone carboxylic acid" evidence="1">
    <location>
        <position position="1"/>
    </location>
</feature>
<evidence type="ECO:0000269" key="1">
    <source>
    </source>
</evidence>
<evidence type="ECO:0000305" key="2"/>
<organism>
    <name type="scientific">Protobothrops mucrosquamatus</name>
    <name type="common">Taiwan habu</name>
    <name type="synonym">Trimeresurus mucrosquamatus</name>
    <dbReference type="NCBI Taxonomy" id="103944"/>
    <lineage>
        <taxon>Eukaryota</taxon>
        <taxon>Metazoa</taxon>
        <taxon>Chordata</taxon>
        <taxon>Craniata</taxon>
        <taxon>Vertebrata</taxon>
        <taxon>Euteleostomi</taxon>
        <taxon>Lepidosauria</taxon>
        <taxon>Squamata</taxon>
        <taxon>Bifurcata</taxon>
        <taxon>Unidentata</taxon>
        <taxon>Episquamata</taxon>
        <taxon>Toxicofera</taxon>
        <taxon>Serpentes</taxon>
        <taxon>Colubroidea</taxon>
        <taxon>Viperidae</taxon>
        <taxon>Crotalinae</taxon>
        <taxon>Protobothrops</taxon>
    </lineage>
</organism>
<comment type="function">
    <text evidence="1">This peptide both inhibits the activity of the angiotensin-converting enzyme (ACE) and enhances the action of bradykinin by inhibiting the peptidases that inactivate it. It acts as an indirect hypotensive agent.</text>
</comment>
<comment type="subcellular location">
    <subcellularLocation>
        <location evidence="1">Secreted</location>
    </subcellularLocation>
</comment>
<comment type="tissue specificity">
    <text evidence="1">Expressed by the venom gland.</text>
</comment>
<comment type="mass spectrometry" mass="1110.7" method="Electrospray" evidence="1"/>
<comment type="similarity">
    <text evidence="2">Belongs to the bradykinin-potentiating peptide family.</text>
</comment>
<dbReference type="GO" id="GO:0005576">
    <property type="term" value="C:extracellular region"/>
    <property type="evidence" value="ECO:0007669"/>
    <property type="project" value="UniProtKB-SubCell"/>
</dbReference>
<dbReference type="GO" id="GO:0030414">
    <property type="term" value="F:peptidase inhibitor activity"/>
    <property type="evidence" value="ECO:0007669"/>
    <property type="project" value="UniProtKB-KW"/>
</dbReference>
<dbReference type="GO" id="GO:0090729">
    <property type="term" value="F:toxin activity"/>
    <property type="evidence" value="ECO:0007669"/>
    <property type="project" value="UniProtKB-KW"/>
</dbReference>
<dbReference type="GO" id="GO:0008217">
    <property type="term" value="P:regulation of blood pressure"/>
    <property type="evidence" value="ECO:0007669"/>
    <property type="project" value="UniProtKB-KW"/>
</dbReference>
<reference key="1">
    <citation type="journal article" date="2003" name="Sheng Wu Hua Xue Yu Sheng Wu Wu Li Xue Bao">
        <title>Characterization of a new bradykinin-potentiating peptide (TmF) from Trimeresurus mucrosquamatus.</title>
        <authorList>
            <person name="Jia Y.-H."/>
            <person name="Li D.-S."/>
            <person name="Zhu S.-W."/>
            <person name="Zhang L.-Y."/>
            <person name="Ding L.-S."/>
            <person name="Wang W.-Y."/>
            <person name="Xiong Y.-L."/>
        </authorList>
    </citation>
    <scope>PROTEIN SEQUENCE</scope>
    <scope>FUNCTION</scope>
    <scope>SUBCELLULAR LOCATION</scope>
    <scope>TISSUE SPECIFICITY</scope>
    <scope>MASS SPECTROMETRY</scope>
    <scope>PYROGLUTAMATE FORMATION AT GLN-1</scope>
    <source>
        <tissue>Venom</tissue>
    </source>
</reference>
<protein>
    <recommendedName>
        <fullName>Bradykinin-potentiating peptide TmF</fullName>
        <shortName>BPP-TmF</shortName>
    </recommendedName>
</protein>
<name>BPPF_PROMU</name>
<keyword id="KW-0903">Direct protein sequencing</keyword>
<keyword id="KW-0382">Hypotensive agent</keyword>
<keyword id="KW-0481">Metalloenzyme inhibitor</keyword>
<keyword id="KW-0483">Metalloprotease inhibitor</keyword>
<keyword id="KW-0646">Protease inhibitor</keyword>
<keyword id="KW-0873">Pyrrolidone carboxylic acid</keyword>
<keyword id="KW-0964">Secreted</keyword>
<keyword id="KW-0800">Toxin</keyword>